<organism>
    <name type="scientific">Candida albicans (strain SC5314 / ATCC MYA-2876)</name>
    <name type="common">Yeast</name>
    <dbReference type="NCBI Taxonomy" id="237561"/>
    <lineage>
        <taxon>Eukaryota</taxon>
        <taxon>Fungi</taxon>
        <taxon>Dikarya</taxon>
        <taxon>Ascomycota</taxon>
        <taxon>Saccharomycotina</taxon>
        <taxon>Pichiomycetes</taxon>
        <taxon>Debaryomycetaceae</taxon>
        <taxon>Candida/Lodderomyces clade</taxon>
        <taxon>Candida</taxon>
    </lineage>
</organism>
<reference key="1">
    <citation type="journal article" date="2004" name="Proc. Natl. Acad. Sci. U.S.A.">
        <title>The diploid genome sequence of Candida albicans.</title>
        <authorList>
            <person name="Jones T."/>
            <person name="Federspiel N.A."/>
            <person name="Chibana H."/>
            <person name="Dungan J."/>
            <person name="Kalman S."/>
            <person name="Magee B.B."/>
            <person name="Newport G."/>
            <person name="Thorstenson Y.R."/>
            <person name="Agabian N."/>
            <person name="Magee P.T."/>
            <person name="Davis R.W."/>
            <person name="Scherer S."/>
        </authorList>
    </citation>
    <scope>NUCLEOTIDE SEQUENCE [LARGE SCALE GENOMIC DNA]</scope>
    <source>
        <strain>SC5314 / ATCC MYA-2876</strain>
    </source>
</reference>
<reference key="2">
    <citation type="journal article" date="2007" name="Genome Biol.">
        <title>Assembly of the Candida albicans genome into sixteen supercontigs aligned on the eight chromosomes.</title>
        <authorList>
            <person name="van het Hoog M."/>
            <person name="Rast T.J."/>
            <person name="Martchenko M."/>
            <person name="Grindle S."/>
            <person name="Dignard D."/>
            <person name="Hogues H."/>
            <person name="Cuomo C."/>
            <person name="Berriman M."/>
            <person name="Scherer S."/>
            <person name="Magee B.B."/>
            <person name="Whiteway M."/>
            <person name="Chibana H."/>
            <person name="Nantel A."/>
            <person name="Magee P.T."/>
        </authorList>
    </citation>
    <scope>GENOME REANNOTATION</scope>
    <source>
        <strain>SC5314 / ATCC MYA-2876</strain>
    </source>
</reference>
<reference key="3">
    <citation type="journal article" date="2013" name="Genome Biol.">
        <title>Assembly of a phased diploid Candida albicans genome facilitates allele-specific measurements and provides a simple model for repeat and indel structure.</title>
        <authorList>
            <person name="Muzzey D."/>
            <person name="Schwartz K."/>
            <person name="Weissman J.S."/>
            <person name="Sherlock G."/>
        </authorList>
    </citation>
    <scope>NUCLEOTIDE SEQUENCE [LARGE SCALE GENOMIC DNA]</scope>
    <scope>GENOME REANNOTATION</scope>
    <source>
        <strain>SC5314 / ATCC MYA-2876</strain>
    </source>
</reference>
<evidence type="ECO:0000250" key="1">
    <source>
        <dbReference type="UniProtKB" id="P32179"/>
    </source>
</evidence>
<evidence type="ECO:0000305" key="2"/>
<accession>P0CY20</accession>
<accession>A0A1D8PPH6</accession>
<accession>P46594</accession>
<accession>Q59WV3</accession>
<accession>Q59XQ8</accession>
<dbReference type="EC" id="3.1.3.7" evidence="1"/>
<dbReference type="EMBL" id="CP017628">
    <property type="protein sequence ID" value="AOW30043.1"/>
    <property type="status" value="ALT_SEQ"/>
    <property type="molecule type" value="Genomic_DNA"/>
</dbReference>
<dbReference type="RefSeq" id="XP_714308.2">
    <property type="nucleotide sequence ID" value="XM_709215.2"/>
</dbReference>
<dbReference type="SMR" id="P0CY20"/>
<dbReference type="BioGRID" id="1227139">
    <property type="interactions" value="1"/>
</dbReference>
<dbReference type="FunCoup" id="P0CY20">
    <property type="interactions" value="79"/>
</dbReference>
<dbReference type="STRING" id="237561.P0CY20"/>
<dbReference type="GeneID" id="3644045"/>
<dbReference type="KEGG" id="cal:CAALFM_C600970CA"/>
<dbReference type="eggNOG" id="KOG1528">
    <property type="taxonomic scope" value="Eukaryota"/>
</dbReference>
<dbReference type="HOGENOM" id="CLU_033446_2_1_1"/>
<dbReference type="InParanoid" id="P0CY20"/>
<dbReference type="OrthoDB" id="411145at2759"/>
<dbReference type="PRO" id="PR:P0CY20"/>
<dbReference type="Proteomes" id="UP000000559">
    <property type="component" value="Chromosome 6"/>
</dbReference>
<dbReference type="GO" id="GO:0008441">
    <property type="term" value="F:3'(2'),5'-bisphosphate nucleotidase activity"/>
    <property type="evidence" value="ECO:0000318"/>
    <property type="project" value="GO_Central"/>
</dbReference>
<dbReference type="GO" id="GO:0046872">
    <property type="term" value="F:metal ion binding"/>
    <property type="evidence" value="ECO:0007669"/>
    <property type="project" value="UniProtKB-KW"/>
</dbReference>
<dbReference type="GO" id="GO:0000166">
    <property type="term" value="F:nucleotide binding"/>
    <property type="evidence" value="ECO:0007669"/>
    <property type="project" value="UniProtKB-KW"/>
</dbReference>
<dbReference type="GO" id="GO:0008652">
    <property type="term" value="P:amino acid biosynthetic process"/>
    <property type="evidence" value="ECO:0007669"/>
    <property type="project" value="UniProtKB-KW"/>
</dbReference>
<dbReference type="GO" id="GO:0046854">
    <property type="term" value="P:phosphatidylinositol phosphate biosynthetic process"/>
    <property type="evidence" value="ECO:0007669"/>
    <property type="project" value="InterPro"/>
</dbReference>
<dbReference type="GO" id="GO:0000103">
    <property type="term" value="P:sulfate assimilation"/>
    <property type="evidence" value="ECO:0000318"/>
    <property type="project" value="GO_Central"/>
</dbReference>
<dbReference type="CDD" id="cd01517">
    <property type="entry name" value="PAP_phosphatase"/>
    <property type="match status" value="1"/>
</dbReference>
<dbReference type="FunFam" id="3.30.540.10:FF:000015">
    <property type="entry name" value="3',5'-bisphosphate nucleotidase"/>
    <property type="match status" value="1"/>
</dbReference>
<dbReference type="FunFam" id="3.40.190.80:FF:000003">
    <property type="entry name" value="PAP-specific phosphatase HAL2-like"/>
    <property type="match status" value="1"/>
</dbReference>
<dbReference type="Gene3D" id="3.40.190.80">
    <property type="match status" value="1"/>
</dbReference>
<dbReference type="Gene3D" id="3.30.540.10">
    <property type="entry name" value="Fructose-1,6-Bisphosphatase, subunit A, domain 1"/>
    <property type="match status" value="1"/>
</dbReference>
<dbReference type="InterPro" id="IPR006239">
    <property type="entry name" value="DPNP"/>
</dbReference>
<dbReference type="InterPro" id="IPR020583">
    <property type="entry name" value="Inositol_monoP_metal-BS"/>
</dbReference>
<dbReference type="InterPro" id="IPR051090">
    <property type="entry name" value="Inositol_monoP_superfamily"/>
</dbReference>
<dbReference type="InterPro" id="IPR000760">
    <property type="entry name" value="Inositol_monophosphatase-like"/>
</dbReference>
<dbReference type="InterPro" id="IPR020550">
    <property type="entry name" value="Inositol_monophosphatase_CS"/>
</dbReference>
<dbReference type="NCBIfam" id="TIGR01330">
    <property type="entry name" value="bisphos_HAL2"/>
    <property type="match status" value="1"/>
</dbReference>
<dbReference type="PANTHER" id="PTHR43200:SF6">
    <property type="entry name" value="3'(2'),5'-BISPHOSPHATE NUCLEOTIDASE"/>
    <property type="match status" value="1"/>
</dbReference>
<dbReference type="PANTHER" id="PTHR43200">
    <property type="entry name" value="PHOSPHATASE"/>
    <property type="match status" value="1"/>
</dbReference>
<dbReference type="Pfam" id="PF00459">
    <property type="entry name" value="Inositol_P"/>
    <property type="match status" value="1"/>
</dbReference>
<dbReference type="SUPFAM" id="SSF56655">
    <property type="entry name" value="Carbohydrate phosphatase"/>
    <property type="match status" value="1"/>
</dbReference>
<dbReference type="PROSITE" id="PS00629">
    <property type="entry name" value="IMP_1"/>
    <property type="match status" value="1"/>
</dbReference>
<dbReference type="PROSITE" id="PS00630">
    <property type="entry name" value="IMP_2"/>
    <property type="match status" value="1"/>
</dbReference>
<protein>
    <recommendedName>
        <fullName>3'(2'),5'-bisphosphate nucleotidase 1</fullName>
        <ecNumber evidence="1">3.1.3.7</ecNumber>
    </recommendedName>
    <alternativeName>
        <fullName>3'(2'),5-bisphosphonucleoside 3'(2')-phosphohydrolase 1</fullName>
    </alternativeName>
    <alternativeName>
        <fullName>DPNPase 1</fullName>
    </alternativeName>
    <alternativeName>
        <fullName>Halotolerance protein HAL21</fullName>
    </alternativeName>
</protein>
<name>HAL21_CANAL</name>
<gene>
    <name type="primary">HAL21</name>
    <name type="synonym">MET222</name>
    <name type="ordered locus">CAALFM_C600970CA</name>
    <name type="ORF">CaO19.7746</name>
    <name type="ORF">CaO19.99</name>
</gene>
<keyword id="KW-0028">Amino-acid biosynthesis</keyword>
<keyword id="KW-0378">Hydrolase</keyword>
<keyword id="KW-0460">Magnesium</keyword>
<keyword id="KW-0479">Metal-binding</keyword>
<keyword id="KW-0547">Nucleotide-binding</keyword>
<keyword id="KW-1185">Reference proteome</keyword>
<comment type="function">
    <text evidence="1">Phosphatase that converts adenosine 3'-phosphate 5'-phosphosulfate (PAPS) to adenosine 5'-phosphosulfate (APS) and 3'(2')-phosphoadenosine 5'-phosphate (PAP) to AMP. Regulates the flux of sulfur in the sulfur-activation pathway by converting PAPS to APS. Involved in salt tolerance.</text>
</comment>
<comment type="catalytic activity">
    <reaction evidence="1">
        <text>3'-phosphoadenylyl sulfate + H2O = adenosine 5'-phosphosulfate + phosphate</text>
        <dbReference type="Rhea" id="RHEA:77639"/>
        <dbReference type="ChEBI" id="CHEBI:15377"/>
        <dbReference type="ChEBI" id="CHEBI:43474"/>
        <dbReference type="ChEBI" id="CHEBI:58243"/>
        <dbReference type="ChEBI" id="CHEBI:58339"/>
        <dbReference type="EC" id="3.1.3.7"/>
    </reaction>
    <physiologicalReaction direction="left-to-right" evidence="1">
        <dbReference type="Rhea" id="RHEA:77640"/>
    </physiologicalReaction>
</comment>
<comment type="catalytic activity">
    <reaction evidence="1">
        <text>adenosine 3',5'-bisphosphate + H2O = AMP + phosphate</text>
        <dbReference type="Rhea" id="RHEA:10040"/>
        <dbReference type="ChEBI" id="CHEBI:15377"/>
        <dbReference type="ChEBI" id="CHEBI:43474"/>
        <dbReference type="ChEBI" id="CHEBI:58343"/>
        <dbReference type="ChEBI" id="CHEBI:456215"/>
        <dbReference type="EC" id="3.1.3.7"/>
    </reaction>
    <physiologicalReaction direction="left-to-right" evidence="1">
        <dbReference type="Rhea" id="RHEA:10041"/>
    </physiologicalReaction>
</comment>
<comment type="catalytic activity">
    <reaction evidence="1">
        <text>adenosine 2',5'-bisphosphate + H2O = AMP + phosphate</text>
        <dbReference type="Rhea" id="RHEA:77643"/>
        <dbReference type="ChEBI" id="CHEBI:15377"/>
        <dbReference type="ChEBI" id="CHEBI:43474"/>
        <dbReference type="ChEBI" id="CHEBI:194156"/>
        <dbReference type="ChEBI" id="CHEBI:456215"/>
        <dbReference type="EC" id="3.1.3.7"/>
    </reaction>
    <physiologicalReaction direction="left-to-right" evidence="1">
        <dbReference type="Rhea" id="RHEA:77644"/>
    </physiologicalReaction>
</comment>
<comment type="cofactor">
    <cofactor evidence="1">
        <name>Mg(2+)</name>
        <dbReference type="ChEBI" id="CHEBI:18420"/>
    </cofactor>
    <text evidence="1">Binds 3 Mg(2+) ions per subunit.</text>
</comment>
<comment type="similarity">
    <text evidence="2">Belongs to the inositol monophosphatase superfamily.</text>
</comment>
<comment type="sequence caution" evidence="2">
    <conflict type="erroneous initiation">
        <sequence resource="EMBL-CDS" id="AOW30043"/>
    </conflict>
    <text>Truncated N-terminus.</text>
</comment>
<comment type="sequence caution" evidence="2">
    <conflict type="frameshift">
        <sequence resource="EMBL-CDS" id="AOW30043"/>
    </conflict>
</comment>
<sequence>MSHTTHPYQKELEVATLAVKRASLLTKQLSDSIVQTARSGTLTKDDKSPVTIGDFASQAIINHAIKLNFPSDEIVGEEDSQELQENSSLADQVLSLIIKIQQETSVYNDVVGTLTDKNKVFQSIDYGNSQGGSKGRFWALDPIDGTKGFLRGDQFAVCLALIEDGKVVLGVIGCPNLSENIVSNEEHSGVVGGLYSAVKGVGSFYSELFKEGTEPLSQQKPIKMQNHTNPSQLKVVEGVEKGHSSHSTQAEIKAKLGFDPTTVAKQTVNLDSQVKYCVLASGQADIYLRLPVSDTYREKIWDHAAGNILIYESGGQVGDVTGAPLNFGNGRTLDSKGVIAANKEIFDKVIDAVTEIRKSSTPRV</sequence>
<proteinExistence type="inferred from homology"/>
<feature type="chain" id="PRO_0000142538" description="3'(2'),5'-bisphosphate nucleotidase 1">
    <location>
        <begin position="1"/>
        <end position="364"/>
    </location>
</feature>
<feature type="active site" description="Proton acceptor" evidence="1">
    <location>
        <position position="54"/>
    </location>
</feature>
<feature type="active site" description="Proton acceptor" evidence="1">
    <location>
        <position position="146"/>
    </location>
</feature>
<feature type="binding site" evidence="1">
    <location>
        <position position="77"/>
    </location>
    <ligand>
        <name>Mg(2+)</name>
        <dbReference type="ChEBI" id="CHEBI:18420"/>
        <label>1</label>
    </ligand>
</feature>
<feature type="binding site" evidence="1">
    <location>
        <position position="77"/>
    </location>
    <ligand>
        <name>Mg(2+)</name>
        <dbReference type="ChEBI" id="CHEBI:18420"/>
        <label>3</label>
    </ligand>
</feature>
<feature type="binding site" evidence="1">
    <location>
        <position position="141"/>
    </location>
    <ligand>
        <name>Mg(2+)</name>
        <dbReference type="ChEBI" id="CHEBI:18420"/>
        <label>1</label>
    </ligand>
</feature>
<feature type="binding site" evidence="1">
    <location>
        <position position="141"/>
    </location>
    <ligand>
        <name>Mg(2+)</name>
        <dbReference type="ChEBI" id="CHEBI:18420"/>
        <label>2</label>
    </ligand>
</feature>
<feature type="binding site" evidence="1">
    <location>
        <position position="143"/>
    </location>
    <ligand>
        <name>Mg(2+)</name>
        <dbReference type="ChEBI" id="CHEBI:18420"/>
        <label>1</label>
    </ligand>
</feature>
<feature type="binding site" evidence="1">
    <location>
        <position position="144"/>
    </location>
    <ligand>
        <name>Mg(2+)</name>
        <dbReference type="ChEBI" id="CHEBI:18420"/>
        <label>2</label>
    </ligand>
</feature>
<feature type="binding site" evidence="1">
    <location>
        <position position="146"/>
    </location>
    <ligand>
        <name>adenosine 3',5'-bisphosphate</name>
        <dbReference type="ChEBI" id="CHEBI:58343"/>
    </ligand>
</feature>
<feature type="binding site" evidence="1">
    <location>
        <position position="243"/>
    </location>
    <ligand>
        <name>adenosine 3',5'-bisphosphate</name>
        <dbReference type="ChEBI" id="CHEBI:58343"/>
    </ligand>
</feature>
<feature type="binding site" evidence="1">
    <location>
        <position position="243"/>
    </location>
    <ligand>
        <name>AMP</name>
        <dbReference type="ChEBI" id="CHEBI:456215"/>
    </ligand>
</feature>
<feature type="binding site" evidence="1">
    <location>
        <position position="272"/>
    </location>
    <ligand>
        <name>adenosine 3',5'-bisphosphate</name>
        <dbReference type="ChEBI" id="CHEBI:58343"/>
    </ligand>
</feature>
<feature type="binding site" evidence="1">
    <location>
        <position position="272"/>
    </location>
    <ligand>
        <name>AMP</name>
        <dbReference type="ChEBI" id="CHEBI:456215"/>
    </ligand>
</feature>
<feature type="binding site" evidence="1">
    <location>
        <position position="275"/>
    </location>
    <ligand>
        <name>adenosine 3',5'-bisphosphate</name>
        <dbReference type="ChEBI" id="CHEBI:58343"/>
    </ligand>
</feature>
<feature type="binding site" evidence="1">
    <location>
        <position position="275"/>
    </location>
    <ligand>
        <name>AMP</name>
        <dbReference type="ChEBI" id="CHEBI:456215"/>
    </ligand>
</feature>
<feature type="binding site" evidence="1">
    <location>
        <position position="289"/>
    </location>
    <ligand>
        <name>adenosine 3',5'-bisphosphate</name>
        <dbReference type="ChEBI" id="CHEBI:58343"/>
    </ligand>
</feature>
<feature type="binding site" evidence="1">
    <location>
        <position position="289"/>
    </location>
    <ligand>
        <name>AMP</name>
        <dbReference type="ChEBI" id="CHEBI:456215"/>
    </ligand>
</feature>
<feature type="binding site" evidence="1">
    <location>
        <position position="302"/>
    </location>
    <ligand>
        <name>adenosine 3',5'-bisphosphate</name>
        <dbReference type="ChEBI" id="CHEBI:58343"/>
    </ligand>
</feature>
<feature type="binding site" evidence="1">
    <location>
        <position position="302"/>
    </location>
    <ligand>
        <name>AMP</name>
        <dbReference type="ChEBI" id="CHEBI:456215"/>
    </ligand>
</feature>
<feature type="binding site" evidence="1">
    <location>
        <position position="302"/>
    </location>
    <ligand>
        <name>Mg(2+)</name>
        <dbReference type="ChEBI" id="CHEBI:18420"/>
        <label>2</label>
    </ligand>
</feature>